<dbReference type="EC" id="2.1.1.207" evidence="1"/>
<dbReference type="EMBL" id="CP000462">
    <property type="protein sequence ID" value="ABK36903.1"/>
    <property type="status" value="ALT_INIT"/>
    <property type="molecule type" value="Genomic_DNA"/>
</dbReference>
<dbReference type="RefSeq" id="WP_029302634.1">
    <property type="nucleotide sequence ID" value="NC_008570.1"/>
</dbReference>
<dbReference type="RefSeq" id="YP_854721.1">
    <property type="nucleotide sequence ID" value="NC_008570.1"/>
</dbReference>
<dbReference type="SMR" id="A0KEQ6"/>
<dbReference type="STRING" id="380703.AHA_0188"/>
<dbReference type="EnsemblBacteria" id="ABK36903">
    <property type="protein sequence ID" value="ABK36903"/>
    <property type="gene ID" value="AHA_0188"/>
</dbReference>
<dbReference type="GeneID" id="4486818"/>
<dbReference type="KEGG" id="aha:AHA_0188"/>
<dbReference type="PATRIC" id="fig|380703.7.peg.181"/>
<dbReference type="eggNOG" id="COG0219">
    <property type="taxonomic scope" value="Bacteria"/>
</dbReference>
<dbReference type="HOGENOM" id="CLU_110125_1_0_6"/>
<dbReference type="OrthoDB" id="9789043at2"/>
<dbReference type="Proteomes" id="UP000000756">
    <property type="component" value="Chromosome"/>
</dbReference>
<dbReference type="GO" id="GO:0005737">
    <property type="term" value="C:cytoplasm"/>
    <property type="evidence" value="ECO:0007669"/>
    <property type="project" value="UniProtKB-SubCell"/>
</dbReference>
<dbReference type="GO" id="GO:0003723">
    <property type="term" value="F:RNA binding"/>
    <property type="evidence" value="ECO:0007669"/>
    <property type="project" value="InterPro"/>
</dbReference>
<dbReference type="GO" id="GO:0141102">
    <property type="term" value="F:tRNA (5-carboxymethylaminomethyluridine(34)-2'-O)-methyltransferase activity"/>
    <property type="evidence" value="ECO:0007669"/>
    <property type="project" value="RHEA"/>
</dbReference>
<dbReference type="GO" id="GO:0141098">
    <property type="term" value="F:tRNA (cytidine(34)-2'-O)-methyltransferase activity"/>
    <property type="evidence" value="ECO:0007669"/>
    <property type="project" value="RHEA"/>
</dbReference>
<dbReference type="GO" id="GO:0002131">
    <property type="term" value="P:wobble position cytosine ribose methylation"/>
    <property type="evidence" value="ECO:0007669"/>
    <property type="project" value="TreeGrafter"/>
</dbReference>
<dbReference type="GO" id="GO:0002132">
    <property type="term" value="P:wobble position uridine ribose methylation"/>
    <property type="evidence" value="ECO:0007669"/>
    <property type="project" value="TreeGrafter"/>
</dbReference>
<dbReference type="CDD" id="cd18094">
    <property type="entry name" value="SpoU-like_TrmL"/>
    <property type="match status" value="1"/>
</dbReference>
<dbReference type="FunFam" id="3.40.1280.10:FF:000002">
    <property type="entry name" value="Peptidylprolyl isomerase"/>
    <property type="match status" value="1"/>
</dbReference>
<dbReference type="Gene3D" id="3.40.1280.10">
    <property type="match status" value="1"/>
</dbReference>
<dbReference type="HAMAP" id="MF_01885">
    <property type="entry name" value="tRNA_methyltr_TrmL"/>
    <property type="match status" value="1"/>
</dbReference>
<dbReference type="InterPro" id="IPR029028">
    <property type="entry name" value="Alpha/beta_knot_MTases"/>
</dbReference>
<dbReference type="InterPro" id="IPR001537">
    <property type="entry name" value="SpoU_MeTrfase"/>
</dbReference>
<dbReference type="InterPro" id="IPR016914">
    <property type="entry name" value="TrmL"/>
</dbReference>
<dbReference type="InterPro" id="IPR029026">
    <property type="entry name" value="tRNA_m1G_MTases_N"/>
</dbReference>
<dbReference type="NCBIfam" id="TIGR00185">
    <property type="entry name" value="tRNA_yibK_trmL"/>
    <property type="match status" value="1"/>
</dbReference>
<dbReference type="PANTHER" id="PTHR42971">
    <property type="entry name" value="TRNA (CYTIDINE(34)-2'-O)-METHYLTRANSFERASE"/>
    <property type="match status" value="1"/>
</dbReference>
<dbReference type="PANTHER" id="PTHR42971:SF1">
    <property type="entry name" value="TRNA (CYTIDINE(34)-2'-O)-METHYLTRANSFERASE"/>
    <property type="match status" value="1"/>
</dbReference>
<dbReference type="Pfam" id="PF00588">
    <property type="entry name" value="SpoU_methylase"/>
    <property type="match status" value="1"/>
</dbReference>
<dbReference type="PIRSF" id="PIRSF029256">
    <property type="entry name" value="SpoU_TrmH_prd"/>
    <property type="match status" value="1"/>
</dbReference>
<dbReference type="SUPFAM" id="SSF75217">
    <property type="entry name" value="alpha/beta knot"/>
    <property type="match status" value="1"/>
</dbReference>
<comment type="function">
    <text evidence="1">Methylates the ribose at the nucleotide 34 wobble position in the two leucyl isoacceptors tRNA(Leu)(CmAA) and tRNA(Leu)(cmnm5UmAA). Catalyzes the methyl transfer from S-adenosyl-L-methionine to the 2'-OH of the wobble nucleotide.</text>
</comment>
<comment type="catalytic activity">
    <reaction evidence="1">
        <text>cytidine(34) in tRNA + S-adenosyl-L-methionine = 2'-O-methylcytidine(34) in tRNA + S-adenosyl-L-homocysteine + H(+)</text>
        <dbReference type="Rhea" id="RHEA:43084"/>
        <dbReference type="Rhea" id="RHEA-COMP:10331"/>
        <dbReference type="Rhea" id="RHEA-COMP:10332"/>
        <dbReference type="ChEBI" id="CHEBI:15378"/>
        <dbReference type="ChEBI" id="CHEBI:57856"/>
        <dbReference type="ChEBI" id="CHEBI:59789"/>
        <dbReference type="ChEBI" id="CHEBI:74495"/>
        <dbReference type="ChEBI" id="CHEBI:82748"/>
        <dbReference type="EC" id="2.1.1.207"/>
    </reaction>
</comment>
<comment type="catalytic activity">
    <reaction evidence="1">
        <text>5-carboxymethylaminomethyluridine(34) in tRNA(Leu) + S-adenosyl-L-methionine = 5-carboxymethylaminomethyl-2'-O-methyluridine(34) in tRNA(Leu) + S-adenosyl-L-homocysteine + H(+)</text>
        <dbReference type="Rhea" id="RHEA:43088"/>
        <dbReference type="Rhea" id="RHEA-COMP:10333"/>
        <dbReference type="Rhea" id="RHEA-COMP:10334"/>
        <dbReference type="ChEBI" id="CHEBI:15378"/>
        <dbReference type="ChEBI" id="CHEBI:57856"/>
        <dbReference type="ChEBI" id="CHEBI:59789"/>
        <dbReference type="ChEBI" id="CHEBI:74508"/>
        <dbReference type="ChEBI" id="CHEBI:74511"/>
        <dbReference type="EC" id="2.1.1.207"/>
    </reaction>
</comment>
<comment type="subunit">
    <text evidence="1">Homodimer.</text>
</comment>
<comment type="subcellular location">
    <subcellularLocation>
        <location evidence="1">Cytoplasm</location>
    </subcellularLocation>
</comment>
<comment type="similarity">
    <text evidence="1">Belongs to the class IV-like SAM-binding methyltransferase superfamily. RNA methyltransferase TrmH family. TrmL subfamily.</text>
</comment>
<comment type="sequence caution" evidence="2">
    <conflict type="erroneous initiation">
        <sequence resource="EMBL-CDS" id="ABK36903"/>
    </conflict>
    <text>Extended N-terminus.</text>
</comment>
<evidence type="ECO:0000255" key="1">
    <source>
        <dbReference type="HAMAP-Rule" id="MF_01885"/>
    </source>
</evidence>
<evidence type="ECO:0000305" key="2"/>
<keyword id="KW-0963">Cytoplasm</keyword>
<keyword id="KW-0489">Methyltransferase</keyword>
<keyword id="KW-1185">Reference proteome</keyword>
<keyword id="KW-0949">S-adenosyl-L-methionine</keyword>
<keyword id="KW-0808">Transferase</keyword>
<keyword id="KW-0819">tRNA processing</keyword>
<reference key="1">
    <citation type="journal article" date="2006" name="J. Bacteriol.">
        <title>Genome sequence of Aeromonas hydrophila ATCC 7966T: jack of all trades.</title>
        <authorList>
            <person name="Seshadri R."/>
            <person name="Joseph S.W."/>
            <person name="Chopra A.K."/>
            <person name="Sha J."/>
            <person name="Shaw J."/>
            <person name="Graf J."/>
            <person name="Haft D.H."/>
            <person name="Wu M."/>
            <person name="Ren Q."/>
            <person name="Rosovitz M.J."/>
            <person name="Madupu R."/>
            <person name="Tallon L."/>
            <person name="Kim M."/>
            <person name="Jin S."/>
            <person name="Vuong H."/>
            <person name="Stine O.C."/>
            <person name="Ali A."/>
            <person name="Horneman A.J."/>
            <person name="Heidelberg J.F."/>
        </authorList>
    </citation>
    <scope>NUCLEOTIDE SEQUENCE [LARGE SCALE GENOMIC DNA]</scope>
    <source>
        <strain>ATCC 7966 / DSM 30187 / BCRC 13018 / CCUG 14551 / JCM 1027 / KCTC 2358 / NCIMB 9240 / NCTC 8049</strain>
    </source>
</reference>
<name>TRML_AERHH</name>
<feature type="chain" id="PRO_0000401941" description="tRNA (cytidine(34)-2'-O)-methyltransferase">
    <location>
        <begin position="1"/>
        <end position="156"/>
    </location>
</feature>
<feature type="binding site" evidence="1">
    <location>
        <position position="100"/>
    </location>
    <ligand>
        <name>S-adenosyl-L-methionine</name>
        <dbReference type="ChEBI" id="CHEBI:59789"/>
    </ligand>
</feature>
<feature type="binding site" evidence="1">
    <location>
        <position position="122"/>
    </location>
    <ligand>
        <name>S-adenosyl-L-methionine</name>
        <dbReference type="ChEBI" id="CHEBI:59789"/>
    </ligand>
</feature>
<feature type="binding site" evidence="1">
    <location>
        <position position="130"/>
    </location>
    <ligand>
        <name>S-adenosyl-L-methionine</name>
        <dbReference type="ChEBI" id="CHEBI:59789"/>
    </ligand>
</feature>
<accession>A0KEQ6</accession>
<organism>
    <name type="scientific">Aeromonas hydrophila subsp. hydrophila (strain ATCC 7966 / DSM 30187 / BCRC 13018 / CCUG 14551 / JCM 1027 / KCTC 2358 / NCIMB 9240 / NCTC 8049)</name>
    <dbReference type="NCBI Taxonomy" id="380703"/>
    <lineage>
        <taxon>Bacteria</taxon>
        <taxon>Pseudomonadati</taxon>
        <taxon>Pseudomonadota</taxon>
        <taxon>Gammaproteobacteria</taxon>
        <taxon>Aeromonadales</taxon>
        <taxon>Aeromonadaceae</taxon>
        <taxon>Aeromonas</taxon>
    </lineage>
</organism>
<sequence length="156" mass="17649">MLDIVLYQPEIPPNTGNIIRLCANTGYRLHLIEPLGFEWDDKRVKRAGLDYHEFAEVKRWPNFEAFLEAVAPTRVFACTTKGRTAHSAVQFAAGDALLFGPESRGLPIEIIESLPFEQRLRIPMLPQSRSMNLANAVAVFVYESWRQLGYAGSLQE</sequence>
<protein>
    <recommendedName>
        <fullName evidence="1">tRNA (cytidine(34)-2'-O)-methyltransferase</fullName>
        <ecNumber evidence="1">2.1.1.207</ecNumber>
    </recommendedName>
    <alternativeName>
        <fullName evidence="1">tRNA (cytidine/uridine-2'-O-)-methyltransferase TrmL</fullName>
    </alternativeName>
</protein>
<proteinExistence type="inferred from homology"/>
<gene>
    <name evidence="1" type="primary">trmL</name>
    <name type="ordered locus">AHA_0188</name>
</gene>